<sequence>MEHFLLEVAAAPLRLIAAKNEKSRSELGRFLAKQVWTPQDRQCVLSTLAQLLLDKDCTVLVGRQLRPLLLDLLERNAEAIKAGGQINHDLHERLCVSMSKLIGNHPDVLPFALRYFKDTSPVFQRLFLESSDANPVRYGRRRMKLRDLMEAAFKFLQQEQSVFRELWDWSVCVPLLRSHDTLVRWYTANCLALVTCMNEEHKLSFLKKIFNSDELIHFRLRLLEEAQLQDLEKALVLANPEVSLWRKQKELQYLQGHLVSSDLSPRVTAVCGVVLPGQLPAPGELGGNRSSSREQELALRSYVLVESVCKSLQTLAMAVASQNAVLLEGPIGCGKTSLVEYLAAVTGRTKPPQLLKVQLGDQTDSKMLLGMYRCTDVPGEFVWQPGTLTQAATMGHWILLEDIDYAPLDVVSVLIPLLENGELLIPGRGDCLKVAPGFQFFATRRLLSCGGNWYRPLNSHATLLDKYWTKIHLDNLDKRELNEVLQSRYPSLLAVVDHLLDIYIQLTGEKHHSWSDSSVGCEQAPEEVSEARRENKRPTLEGRELSLRDLLNWCNRIAHSFDSSSLSASLNIFQEALDCFTAMLSEHTSKLKMAEVIGSKLNISRKKAEFFCQLYKPEIVINELDLQVGRVRLLRKQSEAVHLQREKFTFAATRPSSVLIEQLAVCVSKGEPVLLVGETGTGKTSTIQYLAHITGHRLRVVNMNQQSDTADLLGGYKPVDHKLIWLPLREAFEELFAQTFSKKQNFTFLGHIQTCYRQKRWHDLLRLMQHVHKSAVNKDGKDSETGLLIKEKWEAFGLRLNHAQQQMKMTENTLLFAFVEGTLAQAVKKGEWILLDEINLAAPEILECLSGLLEGSSGSLVLLDRGDTEPLVRHPDFRLFACMNPATDVGKRNLPPGIRNRFTELYVEELESKEDLQVLIVDYLKGLSVNKNTVQGIINFYTALRKESGTKLVDGTGHRPHYSLRTLCRALRFAASNPCGNIQRSLYEGFCLGFLTQLDRASHPIVQKLICQHIVPGNVKSLLKQPIPEPKGGRLIQVEGYWIAVGDKEPTIDETYILTSSVKLNLRDIVRVVSAGTYPVLIQGETSVGKTSLIQWLAAATGNHCVRINNHEHTDIQEYIGCYTSDSSGKLVFKEGVLIDAMRKGYWIILDELNLAPTDVLEALNRLLDDNRELLVTETQEVVKAHPRFMLFATQNPPGLYGGRKVLSRAFRNRFVELHFDELPSSELETILHKRCSLPPSYCSKLVKVMLDLQSYRRSSSVFAGKQGFITLRDLFRWAERYRLAEPTEKEYDWLQHLANDGYMLLAGRVRKQEEIDVIQEVLEKHFKKKLCPQSLFSKENVLKLLGKLSTQISTLECNFGHIVWTEGMRRLAMLVGRALEFGEPVLLVGDTGCGKTTICQVFAALANQKLYSVSCHLHMETSDFLGGLRPVRQKPNDKEEIDTSRLFEWHDGPLVQAMKEDGFFLLDEISLADDSVLERLNSVLEVEKSLVLAEKGSPEDKDSEIELLTAGKKFRILATMNPGGDFGKKELSPALRNRFTEIWCPQSTSREDLIQIISHNLRPGLCLGRIDPKGSDIPEVMLDFIDWLTHQEFGRKCVVSIRDILSWVNFMNKMGEEAALKRPEIISTVTSFVHAACLVYIDGIGSGVTSSGFGTALLARKECLKFLIKRLAKIVRLTEYQKNELKIYDRMKAKEFTGIDNLWGIHPFFIPRGPVLHRNNIADYALSAGTTAMNAQRLLRATKLKKPILLEGSPGVGKTSLVGALAKASGNTLVRINLSEQTDITDLFGADLPVEGGKGGEFAWRDGPLLAALKAGHWVVLDELNLASQSVLEGLNACFDHRGEIYVPELGMSFQVQHEKTKIFGCQNPFRQGGGRKGLPRSFLNRFTQVFVDPLTVIDMEFIASTLFPAIEKNIVKKMVAFNNQIDHEVTVEKKWGQKGGPWEFNLRDLFRWCQLMLVDQSPGCYDPGQHVFLVYGERMRTEEDKKKVIAVFKDVFGSNSNPYMGTRLFRITPYDVQLGYSVLSRGSCVPHPSRHPLLLLHQSFQPLESIMKCVQMSWMVILVGPASVGKTSLVQLLAHLTGHTLKIMAMNSAMDTTELLGGFEQVDLIRPWRRLLEKVEGTVRALLRDSLLISADDAEVVLRAWSHFLLTYKPKCLGEGGKAITMEIVNKLEAVLLLMQRLNNKINSYCKAEFAKLVEEFRSFGVKLTQLASGHSHGTFEWVDSMLVQALKSGDWLLMDNVNFCNPSVLDRLNALLEPGGVLTISERGMIDGSTPTITPNPNFRLFLSMDPVHGDISRAMRNRGLEIYISGEGDASTPDNLDLKVLLHSLGLVGNSVCDILLALHTETRSTVVGSPTSSVSTLIQTAILIVQYLQRGLSLDRAFSEACWEVYVCSQHSPANRKLVQALLEKHVSSLRAHETWGDSILGMGLWPDSVPSALFATEDSHLSTVRRDGQILVYCLNRMSMKTSSWTRSQPFTLQDLEKIMQSPSPENLKFNAVEVNTYWIDEPDVLVMAVKLLIERATNQDWMLRVKWLYHLAKNIPQGLESIQIHLEASAASLRNFYSHSLSGAVSNVFKILQPNTTDEFVIPLDPRWNMQALDMIRNLMDFDPQTDQPDQLFALLESAANKTIIYLDREKRVFTEANLVSVGSKKLRESVLRMSFEFHQDPESYHTLPHEIVVNLAAFFELCDALVLLWVQSSQGMVSDASANEILGSLRWRDRFWTVADTVKVDAPGLALLALHWHWVLKHLVHQIPRLLMNYEDKYYKEVQTVSEHIQNCLGSQTGGFAGIKKLQKFLGRPFPFKDKLVVECFSQLKVLNKVLAIREQMSALGESGWQEDINRLQVVASQWTLKKSLLQAWGLILRANILEDVSLDELKNFVHAQCLELKAKGLSLGFLEKKHDEASSLSHPDLTSVIHLTRSVQLWPAMEYLAMLWRYKVTADFMAQACLRRCSKNQQPQINEEISHLISFCLYHTPVTPQELRDLWSLLHHQKVSPEEITSLWSELFNSMFMSFWSSTVTTNPEYWLMWNPLPGMQQREAPKSVLDSTLKGPGNLNRPIFSKCCFEVLTSSWRASPWDVSGLPILSSSHVTLGEWVERTQQLQDISSMLWTNMAISSVAEFRRTDSQLQGQVLFRHLAGLAELLPESRRQEYMQNCEQLLLGSSQAFQHVGQTLGDMAGQEVLPKELLCQLLTSLHHFVGEGESKRSLPEPAQRGSLWVSLGLLQIQTWLPQARFDPAVKREYKLNYVKEELHQLQCEWKTRNLSSQLQTGRDLEDEVVVSYSHPHVRLLRQRMDRLDNLTCHLLKKQAFRPQLPAYESLVQEIHHYVTSIAKAPAVQDLLTRLLQALHIDGPRSAQVAQSLLKEEASWQQSHHQFRKRLSEEYTFYPDAVSPLQASILQLQHGMRLVASELHTSLHSSMVGADRLGTLATALLAFPSVGPTFPTYYAHADTLCSVKSEEVLRGLGKLILKRSGGKELEGKGQKACPTREQLLMNALLYLRSHVLCKGELDQRALQLFRHVCQEIISEWDEQERIAQEKAEQESGLYRYRSRNSRTALSEEEEEEREFRKQFPLHEKDFADILVQPTLEENKGTSDGQEEEAGTNPALLSQNSMQAVMLIHQQLCLNFARSLWYQQTLPPHEAKHYLSLFLSCYQTGASLVTHFYPLMGVELNDRLLGSQLLACTLSHNTLFGEAPSDLMVKPDGPYDFYQHPNVPEARQCQPVLQGFSEAVSHLLQDWPEHPALEQLLVVMDRIRSFPLSSPISKFLNGLEILLAKAQDWEENASRALSLRKHLDLISQMIIRWRKLELNCWSMSLDNTMKRHTEKSTKHWFSIYQMLEKHMQEQTEEQEDDKQMTLMLLVSTLQAFIEGSSLGEFHVRLQMLLVFHCHVLLMPQVEGKDSLCSVLWNLYHYYKQFFDRVQAKIVELRSPLEKELKEFVKISKWNDVSFWSIKQSVEKTHRTLFKFMKKFEAVLSEPCRSSLVESDKEEQPDFLPRPTDGAASELSSIQNLNRALRETLLAQPAAGQATIPEWCQGAAPSGLEGELLRRLPKLRKRMRKMCLTFMKESPLPRLVEGLDQFTGEVISSVSELQSLKVEPSAEKEKQRSEAKHILMQKQRALSDLFKHLAKIGLSYRKGLAWARSKNPQEMLHLHPLDLQSALSIVSSTQEADSRLLTEISSSWDGCQKYFYRSLARHARLNAALATPAKEMGMGNVERCRGFSAHLMKMLVRQRRSLTTLSEQWIILRNLLSCVQEIHSRLMGPQAYPVAFPPQDGVQQWTERLQHLAMQCQILLEQLSWLLQCCPSVGPAPGHGNVQVLGQPPGPCLEGPELSKGQLCGVVLDLIPSNLSYPSPIPGSQLPSGCRMRKQDHLWQQSTTRLTEMLKTIKTVKADVDKIRQQSCETLFHSWKDFEVCSSALSCLSQVSVHLQGLESLFILPGMEVEQRDSQMALVESLEYVRGEISKAMADFTTWKTHLLTSDSQGGNQMLDEGFVEDFSEQMEIAIRAILCAIQNLEERKNEKAEENTDQASPQEDYAGFERLQSGHLTKLLEDDFWADVSTLHVQKIISAISELLERLKSYGEDGTAAKHLFFSQSCSLLVRLVPVLSSYSDLVLFFLTMSLATHRSTAKLLSVLAQVFTELAQKGFCLPKEFMEDSAGEGATEFHDYEGGGIGEGEGMKDVSDQIGNEEQVEDTFQKGQEKDKEDPDSKSDIKGEDNAIEMSEDFDGKMHDGELEEQEEDDEKSDSEGGDLDKHMGDLNGEEADKLDERLWGDDDEEEDEEEEDNKTEETGPGMDEEDSELVAKDDNLDSGNSNKDKSQQDKKEEKEEAEADDGGQGEDKINEQIDERDYDENEVDPYHGNQEKVPEPEALDLPDDLNLDSEDKNGGEDTDNEEGEEENPLEIKEKPEEAGHEAEERGETETDQNESQSPQEPEEGPSEDDKAEGEEEMDTGADDQDGDAAQHPEEHSEEQQQSVEEKDKEADEEGGENGPADQGFQPQEEEEREDSDTEEQVPEALERKEHASCGQTGVENMQNTQAMELAGAAPEKEQGKEEHGSGAADANQAEGHESNFIAQLASQKHTRKNTQSFKRKPGQADNERSMGDHNERVHKRLRTVDTDSHAEQGPAQQPQAQVEDADAFEHIKQGSDAYDAQTYDVASKEQQQSAKDSGKDQEEEEIEDTLMDTEEQEEFKAADVEQLKPEEIKSGTTAPLGFDEMEVEIQTVKTEEDQDPRTDKAHKETENEKPERSRESTIHTAHQFLMDTIFQPFLKDVNELRQELERQLEMWQPRESGNPEEEKVAAEMWQSYLILTAPLSQRLCEELRLILEPTQAAKLKGDYRTGKRLNIRKVIPYIASQFRKDKIWLRRTKPSKRQYQICLAIDDSSSMVDNHTKQLAFESLAVIGNALTLLEVGQIAVCSFGESVKLLHPFHEQFSDYSGSQILRLCKFQQKKTKIAQFLESVANMFAAAQQLSQNISSETAQLLLVVSDGRGLFLEGKERVLAAVQAARNANIFVIFVVLDNPSSRDSILDIKVPIFKGPGEMPEIRSYMEEFPFPYYIILRDVNALPETLSDALRQWFELVTASDHP</sequence>
<comment type="function">
    <text evidence="1 7">Nuclear chaperone required for maturation and nuclear export of pre-60S ribosome subunits (PubMed:27814492). Functions at successive maturation steps to remove ribosomal factors at critical transition points, first driving the exit of early pre-60S particles from the nucleolus and then driving late pre-60S particles from the nucleus (By similarity). At an early stage in 60S maturation, mediates the dissociation of the PeBoW complex (PES1-BOP1-WDR12) from early pre-60S particles, rendering them competent for export from the nucleolus to the nucleoplasm (By similarity). Subsequently recruited to the nucleoplasmic particles through interaction with SUMO-conjugated PELP1 complex (PubMed:27814492). This binding is only possible if the 5S RNP at the central protuberance has undergone the rotation to complete its maturation (By similarity).</text>
</comment>
<comment type="subunit">
    <text evidence="6 7">Associates with pre-60S ribosomes in the nucleoplasm. Interacts (via its hexameric AAA ATPase ring) with the PELP1 complex (via PELP1); the interaction is regulated by SUMO conjugation of PELP1 and is crucial for recruitment of MDN1 to the pre-ribosomal particle (PubMed:27814492). Interacts (via VWFA/MIDAS domain) with WDR12 (via UBL domain) (PubMed:26601951). Interacts (via VWFA/MIDAS domain) with NLE1 (via UBL domain) (PubMed:26601951).</text>
</comment>
<comment type="interaction">
    <interactant intactId="EBI-1050480">
        <id>Q9NU22</id>
    </interactant>
    <interactant intactId="EBI-716449">
        <id>Q8IZL8</id>
        <label>PELP1</label>
    </interactant>
    <organismsDiffer>false</organismsDiffer>
    <experiments>3</experiments>
</comment>
<comment type="subcellular location">
    <subcellularLocation>
        <location evidence="5">Nucleus</location>
        <location evidence="5">Nucleolus</location>
    </subcellularLocation>
    <subcellularLocation>
        <location evidence="6">Nucleus</location>
        <location evidence="6">Nucleoplasm</location>
    </subcellularLocation>
    <subcellularLocation>
        <location evidence="6">Cytoplasm</location>
    </subcellularLocation>
</comment>
<comment type="similarity">
    <text>Belongs to the midasin family.</text>
</comment>
<name>MDN1_HUMAN</name>
<dbReference type="EMBL" id="AF503925">
    <property type="protein sequence ID" value="AAM77722.1"/>
    <property type="molecule type" value="mRNA"/>
</dbReference>
<dbReference type="EMBL" id="AL096678">
    <property type="status" value="NOT_ANNOTATED_CDS"/>
    <property type="molecule type" value="Genomic_DNA"/>
</dbReference>
<dbReference type="EMBL" id="AL158813">
    <property type="status" value="NOT_ANNOTATED_CDS"/>
    <property type="molecule type" value="Genomic_DNA"/>
</dbReference>
<dbReference type="EMBL" id="AL353692">
    <property type="status" value="NOT_ANNOTATED_CDS"/>
    <property type="molecule type" value="Genomic_DNA"/>
</dbReference>
<dbReference type="EMBL" id="AB002299">
    <property type="protein sequence ID" value="BAA20761.2"/>
    <property type="molecule type" value="mRNA"/>
</dbReference>
<dbReference type="CCDS" id="CCDS5024.1"/>
<dbReference type="RefSeq" id="NP_055426.1">
    <property type="nucleotide sequence ID" value="NM_014611.3"/>
</dbReference>
<dbReference type="SMR" id="Q9NU22"/>
<dbReference type="BioGRID" id="116804">
    <property type="interactions" value="233"/>
</dbReference>
<dbReference type="ComplexPortal" id="CPX-8081">
    <property type="entry name" value="Rixosome RNA degradation complex"/>
</dbReference>
<dbReference type="CORUM" id="Q9NU22"/>
<dbReference type="FunCoup" id="Q9NU22">
    <property type="interactions" value="3492"/>
</dbReference>
<dbReference type="IntAct" id="Q9NU22">
    <property type="interactions" value="92"/>
</dbReference>
<dbReference type="MINT" id="Q9NU22"/>
<dbReference type="STRING" id="9606.ENSP00000358400"/>
<dbReference type="ChEMBL" id="CHEMBL4105779"/>
<dbReference type="GlyConnect" id="2010">
    <property type="glycosylation" value="9 N-Linked glycans (1 site)"/>
</dbReference>
<dbReference type="GlyCosmos" id="Q9NU22">
    <property type="glycosylation" value="1 site, 9 glycans"/>
</dbReference>
<dbReference type="GlyGen" id="Q9NU22">
    <property type="glycosylation" value="7 sites, 10 N-linked glycans (2 sites), 1 O-linked glycan (3 sites)"/>
</dbReference>
<dbReference type="iPTMnet" id="Q9NU22"/>
<dbReference type="PhosphoSitePlus" id="Q9NU22"/>
<dbReference type="SwissPalm" id="Q9NU22"/>
<dbReference type="BioMuta" id="MDN1"/>
<dbReference type="DMDM" id="24212017"/>
<dbReference type="jPOST" id="Q9NU22"/>
<dbReference type="MassIVE" id="Q9NU22"/>
<dbReference type="PaxDb" id="9606-ENSP00000358400"/>
<dbReference type="PeptideAtlas" id="Q9NU22"/>
<dbReference type="ProteomicsDB" id="82649"/>
<dbReference type="Pumba" id="Q9NU22"/>
<dbReference type="Antibodypedia" id="31873">
    <property type="antibodies" value="16 antibodies from 9 providers"/>
</dbReference>
<dbReference type="DNASU" id="23195"/>
<dbReference type="Ensembl" id="ENST00000369393.8">
    <property type="protein sequence ID" value="ENSP00000358400.3"/>
    <property type="gene ID" value="ENSG00000112159.13"/>
</dbReference>
<dbReference type="GeneID" id="23195"/>
<dbReference type="KEGG" id="hsa:23195"/>
<dbReference type="MANE-Select" id="ENST00000369393.8">
    <property type="protein sequence ID" value="ENSP00000358400.3"/>
    <property type="RefSeq nucleotide sequence ID" value="NM_014611.3"/>
    <property type="RefSeq protein sequence ID" value="NP_055426.1"/>
</dbReference>
<dbReference type="UCSC" id="uc003pnn.2">
    <property type="organism name" value="human"/>
</dbReference>
<dbReference type="AGR" id="HGNC:18302"/>
<dbReference type="CTD" id="23195"/>
<dbReference type="DisGeNET" id="23195"/>
<dbReference type="GeneCards" id="MDN1"/>
<dbReference type="HGNC" id="HGNC:18302">
    <property type="gene designation" value="MDN1"/>
</dbReference>
<dbReference type="HPA" id="ENSG00000112159">
    <property type="expression patterns" value="Low tissue specificity"/>
</dbReference>
<dbReference type="MalaCards" id="MDN1"/>
<dbReference type="MIM" id="618200">
    <property type="type" value="gene"/>
</dbReference>
<dbReference type="neXtProt" id="NX_Q9NU22"/>
<dbReference type="OpenTargets" id="ENSG00000112159"/>
<dbReference type="PharmGKB" id="PA30720"/>
<dbReference type="VEuPathDB" id="HostDB:ENSG00000112159"/>
<dbReference type="eggNOG" id="KOG1808">
    <property type="taxonomic scope" value="Eukaryota"/>
</dbReference>
<dbReference type="GeneTree" id="ENSGT00550000074802"/>
<dbReference type="HOGENOM" id="CLU_000050_0_0_1"/>
<dbReference type="InParanoid" id="Q9NU22"/>
<dbReference type="OMA" id="ILEQWHR"/>
<dbReference type="OrthoDB" id="422220at2759"/>
<dbReference type="PAN-GO" id="Q9NU22">
    <property type="GO annotations" value="5 GO annotations based on evolutionary models"/>
</dbReference>
<dbReference type="PhylomeDB" id="Q9NU22"/>
<dbReference type="TreeFam" id="TF300488"/>
<dbReference type="PathwayCommons" id="Q9NU22"/>
<dbReference type="SignaLink" id="Q9NU22"/>
<dbReference type="SIGNOR" id="Q9NU22"/>
<dbReference type="BioGRID-ORCS" id="23195">
    <property type="hits" value="822 hits in 1166 CRISPR screens"/>
</dbReference>
<dbReference type="CD-CODE" id="91857CE7">
    <property type="entry name" value="Nucleolus"/>
</dbReference>
<dbReference type="ChiTaRS" id="MDN1">
    <property type="organism name" value="human"/>
</dbReference>
<dbReference type="GeneWiki" id="MDN1"/>
<dbReference type="GenomeRNAi" id="23195"/>
<dbReference type="Pharos" id="Q9NU22">
    <property type="development level" value="Tdark"/>
</dbReference>
<dbReference type="PRO" id="PR:Q9NU22"/>
<dbReference type="Proteomes" id="UP000005640">
    <property type="component" value="Chromosome 6"/>
</dbReference>
<dbReference type="RNAct" id="Q9NU22">
    <property type="molecule type" value="protein"/>
</dbReference>
<dbReference type="Bgee" id="ENSG00000112159">
    <property type="expression patterns" value="Expressed in right lobe of liver and 94 other cell types or tissues"/>
</dbReference>
<dbReference type="ExpressionAtlas" id="Q9NU22">
    <property type="expression patterns" value="baseline and differential"/>
</dbReference>
<dbReference type="GO" id="GO:0005829">
    <property type="term" value="C:cytosol"/>
    <property type="evidence" value="ECO:0000314"/>
    <property type="project" value="HPA"/>
</dbReference>
<dbReference type="GO" id="GO:0045111">
    <property type="term" value="C:intermediate filament cytoskeleton"/>
    <property type="evidence" value="ECO:0000314"/>
    <property type="project" value="HPA"/>
</dbReference>
<dbReference type="GO" id="GO:0016020">
    <property type="term" value="C:membrane"/>
    <property type="evidence" value="ECO:0007005"/>
    <property type="project" value="UniProtKB"/>
</dbReference>
<dbReference type="GO" id="GO:0005730">
    <property type="term" value="C:nucleolus"/>
    <property type="evidence" value="ECO:0000314"/>
    <property type="project" value="HPA"/>
</dbReference>
<dbReference type="GO" id="GO:0005654">
    <property type="term" value="C:nucleoplasm"/>
    <property type="evidence" value="ECO:0000314"/>
    <property type="project" value="HPA"/>
</dbReference>
<dbReference type="GO" id="GO:0005634">
    <property type="term" value="C:nucleus"/>
    <property type="evidence" value="ECO:0000314"/>
    <property type="project" value="UniProtKB"/>
</dbReference>
<dbReference type="GO" id="GO:0030687">
    <property type="term" value="C:preribosome, large subunit precursor"/>
    <property type="evidence" value="ECO:0000318"/>
    <property type="project" value="GO_Central"/>
</dbReference>
<dbReference type="GO" id="GO:0005524">
    <property type="term" value="F:ATP binding"/>
    <property type="evidence" value="ECO:0007669"/>
    <property type="project" value="UniProtKB-KW"/>
</dbReference>
<dbReference type="GO" id="GO:0016887">
    <property type="term" value="F:ATP hydrolysis activity"/>
    <property type="evidence" value="ECO:0007669"/>
    <property type="project" value="InterPro"/>
</dbReference>
<dbReference type="GO" id="GO:0000027">
    <property type="term" value="P:ribosomal large subunit assembly"/>
    <property type="evidence" value="ECO:0000314"/>
    <property type="project" value="UniProtKB"/>
</dbReference>
<dbReference type="GO" id="GO:0000055">
    <property type="term" value="P:ribosomal large subunit export from nucleus"/>
    <property type="evidence" value="ECO:0000318"/>
    <property type="project" value="GO_Central"/>
</dbReference>
<dbReference type="CDD" id="cd00009">
    <property type="entry name" value="AAA"/>
    <property type="match status" value="2"/>
</dbReference>
<dbReference type="CDD" id="cd01460">
    <property type="entry name" value="vWA_midasin"/>
    <property type="match status" value="1"/>
</dbReference>
<dbReference type="FunFam" id="3.40.50.300:FF:000142">
    <property type="entry name" value="Midasin"/>
    <property type="match status" value="1"/>
</dbReference>
<dbReference type="FunFam" id="3.40.50.300:FF:000582">
    <property type="entry name" value="Midasin"/>
    <property type="match status" value="1"/>
</dbReference>
<dbReference type="FunFam" id="3.40.50.300:FF:000919">
    <property type="entry name" value="Midasin"/>
    <property type="match status" value="1"/>
</dbReference>
<dbReference type="FunFam" id="3.40.50.300:FF:000956">
    <property type="entry name" value="Midasin"/>
    <property type="match status" value="1"/>
</dbReference>
<dbReference type="FunFam" id="3.40.50.300:FF:004550">
    <property type="entry name" value="Midasin"/>
    <property type="match status" value="1"/>
</dbReference>
<dbReference type="FunFam" id="3.40.50.300:FF:004709">
    <property type="entry name" value="Midasin"/>
    <property type="match status" value="1"/>
</dbReference>
<dbReference type="FunFam" id="3.40.50.410:FF:000028">
    <property type="entry name" value="Midasin"/>
    <property type="match status" value="1"/>
</dbReference>
<dbReference type="Gene3D" id="3.40.50.300">
    <property type="entry name" value="P-loop containing nucleotide triphosphate hydrolases"/>
    <property type="match status" value="7"/>
</dbReference>
<dbReference type="Gene3D" id="3.40.50.410">
    <property type="entry name" value="von Willebrand factor, type A domain"/>
    <property type="match status" value="1"/>
</dbReference>
<dbReference type="InterPro" id="IPR003593">
    <property type="entry name" value="AAA+_ATPase"/>
</dbReference>
<dbReference type="InterPro" id="IPR040848">
    <property type="entry name" value="AAA_lid_7"/>
</dbReference>
<dbReference type="InterPro" id="IPR011704">
    <property type="entry name" value="ATPase_dyneun-rel_AAA"/>
</dbReference>
<dbReference type="InterPro" id="IPR048617">
    <property type="entry name" value="MDN1_AAA_lid_4"/>
</dbReference>
<dbReference type="InterPro" id="IPR012099">
    <property type="entry name" value="Midasin"/>
</dbReference>
<dbReference type="InterPro" id="IPR041190">
    <property type="entry name" value="Midasin_AAA_lid_5"/>
</dbReference>
<dbReference type="InterPro" id="IPR027417">
    <property type="entry name" value="P-loop_NTPase"/>
</dbReference>
<dbReference type="InterPro" id="IPR002035">
    <property type="entry name" value="VWF_A"/>
</dbReference>
<dbReference type="InterPro" id="IPR036465">
    <property type="entry name" value="vWFA_dom_sf"/>
</dbReference>
<dbReference type="PANTHER" id="PTHR48103:SF2">
    <property type="entry name" value="MIDASIN"/>
    <property type="match status" value="1"/>
</dbReference>
<dbReference type="PANTHER" id="PTHR48103">
    <property type="entry name" value="MIDASIN-RELATED"/>
    <property type="match status" value="1"/>
</dbReference>
<dbReference type="Pfam" id="PF07728">
    <property type="entry name" value="AAA_5"/>
    <property type="match status" value="8"/>
</dbReference>
<dbReference type="Pfam" id="PF17865">
    <property type="entry name" value="AAA_lid_5"/>
    <property type="match status" value="1"/>
</dbReference>
<dbReference type="Pfam" id="PF17867">
    <property type="entry name" value="AAA_lid_7"/>
    <property type="match status" value="3"/>
</dbReference>
<dbReference type="Pfam" id="PF21108">
    <property type="entry name" value="MDN1_4th"/>
    <property type="match status" value="1"/>
</dbReference>
<dbReference type="PIRSF" id="PIRSF010340">
    <property type="entry name" value="Midasin"/>
    <property type="match status" value="1"/>
</dbReference>
<dbReference type="SMART" id="SM00382">
    <property type="entry name" value="AAA"/>
    <property type="match status" value="6"/>
</dbReference>
<dbReference type="SMART" id="SM00327">
    <property type="entry name" value="VWA"/>
    <property type="match status" value="1"/>
</dbReference>
<dbReference type="SUPFAM" id="SSF52540">
    <property type="entry name" value="P-loop containing nucleoside triphosphate hydrolases"/>
    <property type="match status" value="6"/>
</dbReference>
<dbReference type="SUPFAM" id="SSF53300">
    <property type="entry name" value="vWA-like"/>
    <property type="match status" value="1"/>
</dbReference>
<dbReference type="PROSITE" id="PS50234">
    <property type="entry name" value="VWFA"/>
    <property type="match status" value="1"/>
</dbReference>
<proteinExistence type="evidence at protein level"/>
<organism>
    <name type="scientific">Homo sapiens</name>
    <name type="common">Human</name>
    <dbReference type="NCBI Taxonomy" id="9606"/>
    <lineage>
        <taxon>Eukaryota</taxon>
        <taxon>Metazoa</taxon>
        <taxon>Chordata</taxon>
        <taxon>Craniata</taxon>
        <taxon>Vertebrata</taxon>
        <taxon>Euteleostomi</taxon>
        <taxon>Mammalia</taxon>
        <taxon>Eutheria</taxon>
        <taxon>Euarchontoglires</taxon>
        <taxon>Primates</taxon>
        <taxon>Haplorrhini</taxon>
        <taxon>Catarrhini</taxon>
        <taxon>Hominidae</taxon>
        <taxon>Homo</taxon>
    </lineage>
</organism>
<protein>
    <recommendedName>
        <fullName>Midasin</fullName>
    </recommendedName>
    <alternativeName>
        <fullName>Dynein-related AAA-ATPase MDN1</fullName>
    </alternativeName>
    <alternativeName>
        <fullName>MIDAS-containing protein</fullName>
    </alternativeName>
</protein>
<accession>Q9NU22</accession>
<accession>O15019</accession>
<accession>Q5T794</accession>
<feature type="chain" id="PRO_0000096336" description="Midasin">
    <location>
        <begin position="1"/>
        <end position="5596"/>
    </location>
</feature>
<feature type="domain" description="VWFA" evidence="3">
    <location>
        <begin position="5384"/>
        <end position="5583"/>
    </location>
</feature>
<feature type="region of interest" description="AAA-ATPase protomer 1" evidence="2">
    <location>
        <begin position="307"/>
        <end position="591"/>
    </location>
</feature>
<feature type="region of interest" description="Disordered" evidence="4">
    <location>
        <begin position="517"/>
        <end position="537"/>
    </location>
</feature>
<feature type="region of interest" description="AAA-ATPase protomer 2" evidence="2">
    <location>
        <begin position="659"/>
        <end position="978"/>
    </location>
</feature>
<feature type="region of interest" description="AAA-ATPase protomer 3" evidence="2">
    <location>
        <begin position="1048"/>
        <end position="1316"/>
    </location>
</feature>
<feature type="region of interest" description="AAA-ATPase protomer 4" evidence="2">
    <location>
        <begin position="1362"/>
        <end position="1616"/>
    </location>
</feature>
<feature type="region of interest" description="AAA-ATPase protomer 5" evidence="2">
    <location>
        <begin position="1738"/>
        <end position="1995"/>
    </location>
</feature>
<feature type="region of interest" description="AAA-ATPase protomer 6" evidence="2">
    <location>
        <begin position="2053"/>
        <end position="2313"/>
    </location>
</feature>
<feature type="region of interest" description="Linker" evidence="1">
    <location>
        <begin position="2418"/>
        <end position="4691"/>
    </location>
</feature>
<feature type="region of interest" description="Disordered" evidence="4">
    <location>
        <begin position="3989"/>
        <end position="4008"/>
    </location>
</feature>
<feature type="region of interest" description="Disordered" evidence="4">
    <location>
        <begin position="4669"/>
        <end position="4688"/>
    </location>
</feature>
<feature type="region of interest" description="Disordered" evidence="4">
    <location>
        <begin position="4700"/>
        <end position="5260"/>
    </location>
</feature>
<feature type="compositionally biased region" description="Basic and acidic residues" evidence="4">
    <location>
        <begin position="4702"/>
        <end position="4724"/>
    </location>
</feature>
<feature type="compositionally biased region" description="Acidic residues" evidence="4">
    <location>
        <begin position="4741"/>
        <end position="4757"/>
    </location>
</feature>
<feature type="compositionally biased region" description="Basic and acidic residues" evidence="4">
    <location>
        <begin position="4758"/>
        <end position="4780"/>
    </location>
</feature>
<feature type="compositionally biased region" description="Acidic residues" evidence="4">
    <location>
        <begin position="4781"/>
        <end position="4794"/>
    </location>
</feature>
<feature type="compositionally biased region" description="Basic and acidic residues" evidence="4">
    <location>
        <begin position="4822"/>
        <end position="4834"/>
    </location>
</feature>
<feature type="compositionally biased region" description="Acidic residues" evidence="4">
    <location>
        <begin position="4835"/>
        <end position="4844"/>
    </location>
</feature>
<feature type="compositionally biased region" description="Basic and acidic residues" evidence="4">
    <location>
        <begin position="4845"/>
        <end position="4855"/>
    </location>
</feature>
<feature type="compositionally biased region" description="Acidic residues" evidence="4">
    <location>
        <begin position="4877"/>
        <end position="4888"/>
    </location>
</feature>
<feature type="compositionally biased region" description="Acidic residues" evidence="4">
    <location>
        <begin position="4896"/>
        <end position="4908"/>
    </location>
</feature>
<feature type="compositionally biased region" description="Basic and acidic residues" evidence="4">
    <location>
        <begin position="4909"/>
        <end position="4928"/>
    </location>
</feature>
<feature type="compositionally biased region" description="Acidic residues" evidence="4">
    <location>
        <begin position="4940"/>
        <end position="4966"/>
    </location>
</feature>
<feature type="compositionally biased region" description="Basic and acidic residues" evidence="4">
    <location>
        <begin position="4968"/>
        <end position="4989"/>
    </location>
</feature>
<feature type="compositionally biased region" description="Acidic residues" evidence="4">
    <location>
        <begin position="5007"/>
        <end position="5021"/>
    </location>
</feature>
<feature type="compositionally biased region" description="Polar residues" evidence="4">
    <location>
        <begin position="5033"/>
        <end position="5046"/>
    </location>
</feature>
<feature type="compositionally biased region" description="Basic and acidic residues" evidence="4">
    <location>
        <begin position="5054"/>
        <end position="5064"/>
    </location>
</feature>
<feature type="compositionally biased region" description="Basic residues" evidence="4">
    <location>
        <begin position="5088"/>
        <end position="5101"/>
    </location>
</feature>
<feature type="compositionally biased region" description="Basic and acidic residues" evidence="4">
    <location>
        <begin position="5105"/>
        <end position="5115"/>
    </location>
</feature>
<feature type="compositionally biased region" description="Low complexity" evidence="4">
    <location>
        <begin position="5132"/>
        <end position="5141"/>
    </location>
</feature>
<feature type="compositionally biased region" description="Acidic residues" evidence="4">
    <location>
        <begin position="5181"/>
        <end position="5197"/>
    </location>
</feature>
<feature type="compositionally biased region" description="Basic and acidic residues" evidence="4">
    <location>
        <begin position="5198"/>
        <end position="5213"/>
    </location>
</feature>
<feature type="compositionally biased region" description="Basic and acidic residues" evidence="4">
    <location>
        <begin position="5233"/>
        <end position="5260"/>
    </location>
</feature>
<feature type="binding site" evidence="2">
    <location>
        <begin position="329"/>
        <end position="336"/>
    </location>
    <ligand>
        <name>ATP</name>
        <dbReference type="ChEBI" id="CHEBI:30616"/>
    </ligand>
</feature>
<feature type="binding site" evidence="2">
    <location>
        <begin position="677"/>
        <end position="684"/>
    </location>
    <ligand>
        <name>ATP</name>
        <dbReference type="ChEBI" id="CHEBI:30616"/>
    </ligand>
</feature>
<feature type="binding site" evidence="2">
    <location>
        <begin position="1084"/>
        <end position="1091"/>
    </location>
    <ligand>
        <name>ATP</name>
        <dbReference type="ChEBI" id="CHEBI:30616"/>
    </ligand>
</feature>
<feature type="binding site" evidence="2">
    <location>
        <begin position="1390"/>
        <end position="1397"/>
    </location>
    <ligand>
        <name>ATP</name>
        <dbReference type="ChEBI" id="CHEBI:30616"/>
    </ligand>
</feature>
<feature type="binding site" evidence="2">
    <location>
        <begin position="1753"/>
        <end position="1760"/>
    </location>
    <ligand>
        <name>ATP</name>
        <dbReference type="ChEBI" id="CHEBI:30616"/>
    </ligand>
</feature>
<feature type="binding site" evidence="2">
    <location>
        <begin position="2066"/>
        <end position="2073"/>
    </location>
    <ligand>
        <name>ATP</name>
        <dbReference type="ChEBI" id="CHEBI:30616"/>
    </ligand>
</feature>
<feature type="modified residue" description="N-acetylmethionine" evidence="12">
    <location>
        <position position="1"/>
    </location>
</feature>
<feature type="modified residue" description="Phosphothreonine" evidence="16">
    <location>
        <position position="1177"/>
    </location>
</feature>
<feature type="modified residue" description="N6-acetyllysine" evidence="13">
    <location>
        <position position="1683"/>
    </location>
</feature>
<feature type="modified residue" description="Phosphoserine" evidence="17">
    <location>
        <position position="1754"/>
    </location>
</feature>
<feature type="modified residue" description="Phosphothreonine" evidence="17">
    <location>
        <position position="4212"/>
    </location>
</feature>
<feature type="modified residue" description="Phosphoserine" evidence="9 10 11 14 15 16 17">
    <location>
        <position position="4538"/>
    </location>
</feature>
<feature type="modified residue" description="Phosphoserine" evidence="14 16 17">
    <location>
        <position position="4752"/>
    </location>
</feature>
<feature type="modified residue" description="Phosphoserine" evidence="16 17">
    <location>
        <position position="4754"/>
    </location>
</feature>
<feature type="modified residue" description="Phosphoserine" evidence="16">
    <location>
        <position position="4889"/>
    </location>
</feature>
<feature type="modified residue" description="Phosphothreonine" evidence="8 9 10 15 16 17">
    <location>
        <position position="4898"/>
    </location>
</feature>
<feature type="modified residue" description="Phosphoserine" evidence="16">
    <location>
        <position position="4937"/>
    </location>
</feature>
<feature type="modified residue" description="Phosphoserine" evidence="16">
    <location>
        <position position="4946"/>
    </location>
</feature>
<feature type="modified residue" description="Phosphoserine" evidence="16 17">
    <location>
        <position position="5015"/>
    </location>
</feature>
<feature type="sequence variant" id="VAR_024234" description="In dbSNP:rs4707569.">
    <original>F</original>
    <variation>V</variation>
    <location>
        <position position="440"/>
    </location>
</feature>
<feature type="sequence variant" id="VAR_051171" description="In dbSNP:rs12110451.">
    <original>I</original>
    <variation>V</variation>
    <location>
        <position position="660"/>
    </location>
</feature>
<feature type="sequence variant" id="VAR_051172" description="In dbSNP:rs34764513.">
    <original>A</original>
    <variation>V</variation>
    <location>
        <position position="1044"/>
    </location>
</feature>
<feature type="sequence variant" id="VAR_024235" description="In dbSNP:rs4140446.">
    <original>S</original>
    <variation>N</variation>
    <location>
        <position position="1559"/>
    </location>
</feature>
<feature type="sequence variant" id="VAR_051173" description="In dbSNP:rs16882099.">
    <original>H</original>
    <variation>D</variation>
    <location>
        <position position="1929"/>
    </location>
</feature>
<feature type="sequence variant" id="VAR_051174" description="In dbSNP:rs34208137.">
    <original>H</original>
    <variation>P</variation>
    <location>
        <position position="2972"/>
    </location>
</feature>
<feature type="sequence variant" id="VAR_051175" description="In dbSNP:rs12530146.">
    <original>E</original>
    <variation>K</variation>
    <location>
        <position position="3004"/>
    </location>
</feature>
<feature type="sequence variant" id="VAR_051176" description="In dbSNP:rs9294445.">
    <original>H</original>
    <variation>Y</variation>
    <location>
        <position position="3423"/>
    </location>
</feature>
<feature type="sequence variant" id="VAR_051177" description="In dbSNP:rs34766278.">
    <original>A</original>
    <variation>G</variation>
    <location>
        <position position="3794"/>
    </location>
</feature>
<feature type="sequence variant" id="VAR_051178" description="In dbSNP:rs17293121.">
    <original>R</original>
    <variation>L</variation>
    <location>
        <position position="3986"/>
    </location>
</feature>
<feature type="sequence variant" id="VAR_024236" description="In dbSNP:rs9353689.">
    <original>A</original>
    <variation>S</variation>
    <location>
        <position position="4044"/>
    </location>
</feature>
<feature type="sequence variant" id="VAR_051179" description="In dbSNP:rs35509794.">
    <original>A</original>
    <variation>T</variation>
    <location>
        <position position="4167"/>
    </location>
</feature>
<feature type="sequence variant" id="VAR_051180" description="In dbSNP:rs16882046.">
    <original>I</original>
    <variation>T</variation>
    <location>
        <position position="4720"/>
    </location>
</feature>
<feature type="sequence variant" id="VAR_051181" description="In dbSNP:rs36040566.">
    <original>D</original>
    <variation>E</variation>
    <location>
        <position position="4783"/>
    </location>
</feature>
<feature type="sequence variant" id="VAR_051182" description="In dbSNP:rs4707557.">
    <original>N</original>
    <variation>K</variation>
    <location>
        <position position="5251"/>
    </location>
</feature>
<reference key="1">
    <citation type="journal article" date="2002" name="BMC Genomics">
        <title>Expression and genomic analysis of midasin, a novel and highly conserved AAA protein distantly related to dynein.</title>
        <authorList>
            <person name="Garbarino J.E."/>
            <person name="Gibbons I.R."/>
        </authorList>
    </citation>
    <scope>NUCLEOTIDE SEQUENCE [MRNA]</scope>
    <source>
        <tissue>Testis</tissue>
    </source>
</reference>
<reference key="2">
    <citation type="journal article" date="2003" name="Nature">
        <title>The DNA sequence and analysis of human chromosome 6.</title>
        <authorList>
            <person name="Mungall A.J."/>
            <person name="Palmer S.A."/>
            <person name="Sims S.K."/>
            <person name="Edwards C.A."/>
            <person name="Ashurst J.L."/>
            <person name="Wilming L."/>
            <person name="Jones M.C."/>
            <person name="Horton R."/>
            <person name="Hunt S.E."/>
            <person name="Scott C.E."/>
            <person name="Gilbert J.G.R."/>
            <person name="Clamp M.E."/>
            <person name="Bethel G."/>
            <person name="Milne S."/>
            <person name="Ainscough R."/>
            <person name="Almeida J.P."/>
            <person name="Ambrose K.D."/>
            <person name="Andrews T.D."/>
            <person name="Ashwell R.I.S."/>
            <person name="Babbage A.K."/>
            <person name="Bagguley C.L."/>
            <person name="Bailey J."/>
            <person name="Banerjee R."/>
            <person name="Barker D.J."/>
            <person name="Barlow K.F."/>
            <person name="Bates K."/>
            <person name="Beare D.M."/>
            <person name="Beasley H."/>
            <person name="Beasley O."/>
            <person name="Bird C.P."/>
            <person name="Blakey S.E."/>
            <person name="Bray-Allen S."/>
            <person name="Brook J."/>
            <person name="Brown A.J."/>
            <person name="Brown J.Y."/>
            <person name="Burford D.C."/>
            <person name="Burrill W."/>
            <person name="Burton J."/>
            <person name="Carder C."/>
            <person name="Carter N.P."/>
            <person name="Chapman J.C."/>
            <person name="Clark S.Y."/>
            <person name="Clark G."/>
            <person name="Clee C.M."/>
            <person name="Clegg S."/>
            <person name="Cobley V."/>
            <person name="Collier R.E."/>
            <person name="Collins J.E."/>
            <person name="Colman L.K."/>
            <person name="Corby N.R."/>
            <person name="Coville G.J."/>
            <person name="Culley K.M."/>
            <person name="Dhami P."/>
            <person name="Davies J."/>
            <person name="Dunn M."/>
            <person name="Earthrowl M.E."/>
            <person name="Ellington A.E."/>
            <person name="Evans K.A."/>
            <person name="Faulkner L."/>
            <person name="Francis M.D."/>
            <person name="Frankish A."/>
            <person name="Frankland J."/>
            <person name="French L."/>
            <person name="Garner P."/>
            <person name="Garnett J."/>
            <person name="Ghori M.J."/>
            <person name="Gilby L.M."/>
            <person name="Gillson C.J."/>
            <person name="Glithero R.J."/>
            <person name="Grafham D.V."/>
            <person name="Grant M."/>
            <person name="Gribble S."/>
            <person name="Griffiths C."/>
            <person name="Griffiths M.N.D."/>
            <person name="Hall R."/>
            <person name="Halls K.S."/>
            <person name="Hammond S."/>
            <person name="Harley J.L."/>
            <person name="Hart E.A."/>
            <person name="Heath P.D."/>
            <person name="Heathcott R."/>
            <person name="Holmes S.J."/>
            <person name="Howden P.J."/>
            <person name="Howe K.L."/>
            <person name="Howell G.R."/>
            <person name="Huckle E."/>
            <person name="Humphray S.J."/>
            <person name="Humphries M.D."/>
            <person name="Hunt A.R."/>
            <person name="Johnson C.M."/>
            <person name="Joy A.A."/>
            <person name="Kay M."/>
            <person name="Keenan S.J."/>
            <person name="Kimberley A.M."/>
            <person name="King A."/>
            <person name="Laird G.K."/>
            <person name="Langford C."/>
            <person name="Lawlor S."/>
            <person name="Leongamornlert D.A."/>
            <person name="Leversha M."/>
            <person name="Lloyd C.R."/>
            <person name="Lloyd D.M."/>
            <person name="Loveland J.E."/>
            <person name="Lovell J."/>
            <person name="Martin S."/>
            <person name="Mashreghi-Mohammadi M."/>
            <person name="Maslen G.L."/>
            <person name="Matthews L."/>
            <person name="McCann O.T."/>
            <person name="McLaren S.J."/>
            <person name="McLay K."/>
            <person name="McMurray A."/>
            <person name="Moore M.J.F."/>
            <person name="Mullikin J.C."/>
            <person name="Niblett D."/>
            <person name="Nickerson T."/>
            <person name="Novik K.L."/>
            <person name="Oliver K."/>
            <person name="Overton-Larty E.K."/>
            <person name="Parker A."/>
            <person name="Patel R."/>
            <person name="Pearce A.V."/>
            <person name="Peck A.I."/>
            <person name="Phillimore B.J.C.T."/>
            <person name="Phillips S."/>
            <person name="Plumb R.W."/>
            <person name="Porter K.M."/>
            <person name="Ramsey Y."/>
            <person name="Ranby S.A."/>
            <person name="Rice C.M."/>
            <person name="Ross M.T."/>
            <person name="Searle S.M."/>
            <person name="Sehra H.K."/>
            <person name="Sheridan E."/>
            <person name="Skuce C.D."/>
            <person name="Smith S."/>
            <person name="Smith M."/>
            <person name="Spraggon L."/>
            <person name="Squares S.L."/>
            <person name="Steward C.A."/>
            <person name="Sycamore N."/>
            <person name="Tamlyn-Hall G."/>
            <person name="Tester J."/>
            <person name="Theaker A.J."/>
            <person name="Thomas D.W."/>
            <person name="Thorpe A."/>
            <person name="Tracey A."/>
            <person name="Tromans A."/>
            <person name="Tubby B."/>
            <person name="Wall M."/>
            <person name="Wallis J.M."/>
            <person name="West A.P."/>
            <person name="White S.S."/>
            <person name="Whitehead S.L."/>
            <person name="Whittaker H."/>
            <person name="Wild A."/>
            <person name="Willey D.J."/>
            <person name="Wilmer T.E."/>
            <person name="Wood J.M."/>
            <person name="Wray P.W."/>
            <person name="Wyatt J.C."/>
            <person name="Young L."/>
            <person name="Younger R.M."/>
            <person name="Bentley D.R."/>
            <person name="Coulson A."/>
            <person name="Durbin R.M."/>
            <person name="Hubbard T."/>
            <person name="Sulston J.E."/>
            <person name="Dunham I."/>
            <person name="Rogers J."/>
            <person name="Beck S."/>
        </authorList>
    </citation>
    <scope>NUCLEOTIDE SEQUENCE [LARGE SCALE GENOMIC DNA]</scope>
</reference>
<reference key="3">
    <citation type="journal article" date="1997" name="DNA Res.">
        <title>Prediction of the coding sequences of unidentified human genes. VII. The complete sequences of 100 new cDNA clones from brain which can code for large proteins in vitro.</title>
        <authorList>
            <person name="Nagase T."/>
            <person name="Ishikawa K."/>
            <person name="Nakajima D."/>
            <person name="Ohira M."/>
            <person name="Seki N."/>
            <person name="Miyajima N."/>
            <person name="Tanaka A."/>
            <person name="Kotani H."/>
            <person name="Nomura N."/>
            <person name="Ohara O."/>
        </authorList>
    </citation>
    <scope>NUCLEOTIDE SEQUENCE [LARGE SCALE MRNA] OF 2387-5596</scope>
    <source>
        <tissue>Brain</tissue>
    </source>
</reference>
<reference key="4">
    <citation type="journal article" date="2006" name="Cell">
        <title>Global, in vivo, and site-specific phosphorylation dynamics in signaling networks.</title>
        <authorList>
            <person name="Olsen J.V."/>
            <person name="Blagoev B."/>
            <person name="Gnad F."/>
            <person name="Macek B."/>
            <person name="Kumar C."/>
            <person name="Mortensen P."/>
            <person name="Mann M."/>
        </authorList>
    </citation>
    <scope>PHOSPHORYLATION [LARGE SCALE ANALYSIS] AT THR-4898</scope>
    <scope>IDENTIFICATION BY MASS SPECTROMETRY [LARGE SCALE ANALYSIS]</scope>
    <source>
        <tissue>Cervix carcinoma</tissue>
    </source>
</reference>
<reference key="5">
    <citation type="journal article" date="2008" name="Mol. Cell">
        <title>Kinase-selective enrichment enables quantitative phosphoproteomics of the kinome across the cell cycle.</title>
        <authorList>
            <person name="Daub H."/>
            <person name="Olsen J.V."/>
            <person name="Bairlein M."/>
            <person name="Gnad F."/>
            <person name="Oppermann F.S."/>
            <person name="Korner R."/>
            <person name="Greff Z."/>
            <person name="Keri G."/>
            <person name="Stemmann O."/>
            <person name="Mann M."/>
        </authorList>
    </citation>
    <scope>PHOSPHORYLATION [LARGE SCALE ANALYSIS] AT SER-4538 AND THR-4898</scope>
    <scope>IDENTIFICATION BY MASS SPECTROMETRY [LARGE SCALE ANALYSIS]</scope>
    <source>
        <tissue>Cervix carcinoma</tissue>
    </source>
</reference>
<reference key="6">
    <citation type="journal article" date="2008" name="Proc. Natl. Acad. Sci. U.S.A.">
        <title>A quantitative atlas of mitotic phosphorylation.</title>
        <authorList>
            <person name="Dephoure N."/>
            <person name="Zhou C."/>
            <person name="Villen J."/>
            <person name="Beausoleil S.A."/>
            <person name="Bakalarski C.E."/>
            <person name="Elledge S.J."/>
            <person name="Gygi S.P."/>
        </authorList>
    </citation>
    <scope>PHOSPHORYLATION [LARGE SCALE ANALYSIS] AT SER-4538 AND THR-4898</scope>
    <scope>IDENTIFICATION BY MASS SPECTROMETRY [LARGE SCALE ANALYSIS]</scope>
    <source>
        <tissue>Cervix carcinoma</tissue>
    </source>
</reference>
<reference key="7">
    <citation type="journal article" date="2009" name="Anal. Chem.">
        <title>Lys-N and trypsin cover complementary parts of the phosphoproteome in a refined SCX-based approach.</title>
        <authorList>
            <person name="Gauci S."/>
            <person name="Helbig A.O."/>
            <person name="Slijper M."/>
            <person name="Krijgsveld J."/>
            <person name="Heck A.J."/>
            <person name="Mohammed S."/>
        </authorList>
    </citation>
    <scope>ACETYLATION [LARGE SCALE ANALYSIS] AT MET-1</scope>
    <scope>IDENTIFICATION BY MASS SPECTROMETRY [LARGE SCALE ANALYSIS]</scope>
</reference>
<reference key="8">
    <citation type="journal article" date="2009" name="Mol. Cell. Proteomics">
        <title>Large-scale proteomics analysis of the human kinome.</title>
        <authorList>
            <person name="Oppermann F.S."/>
            <person name="Gnad F."/>
            <person name="Olsen J.V."/>
            <person name="Hornberger R."/>
            <person name="Greff Z."/>
            <person name="Keri G."/>
            <person name="Mann M."/>
            <person name="Daub H."/>
        </authorList>
    </citation>
    <scope>PHOSPHORYLATION [LARGE SCALE ANALYSIS] AT SER-4538</scope>
    <scope>IDENTIFICATION BY MASS SPECTROMETRY [LARGE SCALE ANALYSIS]</scope>
</reference>
<reference key="9">
    <citation type="journal article" date="2009" name="Sci. Signal.">
        <title>Quantitative phosphoproteomic analysis of T cell receptor signaling reveals system-wide modulation of protein-protein interactions.</title>
        <authorList>
            <person name="Mayya V."/>
            <person name="Lundgren D.H."/>
            <person name="Hwang S.-I."/>
            <person name="Rezaul K."/>
            <person name="Wu L."/>
            <person name="Eng J.K."/>
            <person name="Rodionov V."/>
            <person name="Han D.K."/>
        </authorList>
    </citation>
    <scope>PHOSPHORYLATION [LARGE SCALE ANALYSIS] AT SER-4538 AND SER-4752</scope>
    <scope>IDENTIFICATION BY MASS SPECTROMETRY [LARGE SCALE ANALYSIS]</scope>
    <source>
        <tissue>Leukemic T-cell</tissue>
    </source>
</reference>
<reference key="10">
    <citation type="journal article" date="2009" name="Science">
        <title>Lysine acetylation targets protein complexes and co-regulates major cellular functions.</title>
        <authorList>
            <person name="Choudhary C."/>
            <person name="Kumar C."/>
            <person name="Gnad F."/>
            <person name="Nielsen M.L."/>
            <person name="Rehman M."/>
            <person name="Walther T.C."/>
            <person name="Olsen J.V."/>
            <person name="Mann M."/>
        </authorList>
    </citation>
    <scope>ACETYLATION [LARGE SCALE ANALYSIS] AT LYS-1683</scope>
    <scope>IDENTIFICATION BY MASS SPECTROMETRY [LARGE SCALE ANALYSIS]</scope>
</reference>
<reference key="11">
    <citation type="journal article" date="2010" name="Sci. Signal.">
        <title>Quantitative phosphoproteomics reveals widespread full phosphorylation site occupancy during mitosis.</title>
        <authorList>
            <person name="Olsen J.V."/>
            <person name="Vermeulen M."/>
            <person name="Santamaria A."/>
            <person name="Kumar C."/>
            <person name="Miller M.L."/>
            <person name="Jensen L.J."/>
            <person name="Gnad F."/>
            <person name="Cox J."/>
            <person name="Jensen T.S."/>
            <person name="Nigg E.A."/>
            <person name="Brunak S."/>
            <person name="Mann M."/>
        </authorList>
    </citation>
    <scope>PHOSPHORYLATION [LARGE SCALE ANALYSIS] AT SER-4538 AND THR-4898</scope>
    <scope>IDENTIFICATION BY MASS SPECTROMETRY [LARGE SCALE ANALYSIS]</scope>
    <source>
        <tissue>Cervix carcinoma</tissue>
    </source>
</reference>
<reference key="12">
    <citation type="journal article" date="2011" name="BMC Syst. Biol.">
        <title>Initial characterization of the human central proteome.</title>
        <authorList>
            <person name="Burkard T.R."/>
            <person name="Planyavsky M."/>
            <person name="Kaupe I."/>
            <person name="Breitwieser F.P."/>
            <person name="Buerckstuemmer T."/>
            <person name="Bennett K.L."/>
            <person name="Superti-Furga G."/>
            <person name="Colinge J."/>
        </authorList>
    </citation>
    <scope>IDENTIFICATION BY MASS SPECTROMETRY [LARGE SCALE ANALYSIS]</scope>
</reference>
<reference key="13">
    <citation type="journal article" date="2011" name="Sci. Signal.">
        <title>System-wide temporal characterization of the proteome and phosphoproteome of human embryonic stem cell differentiation.</title>
        <authorList>
            <person name="Rigbolt K.T."/>
            <person name="Prokhorova T.A."/>
            <person name="Akimov V."/>
            <person name="Henningsen J."/>
            <person name="Johansen P.T."/>
            <person name="Kratchmarova I."/>
            <person name="Kassem M."/>
            <person name="Mann M."/>
            <person name="Olsen J.V."/>
            <person name="Blagoev B."/>
        </authorList>
    </citation>
    <scope>PHOSPHORYLATION [LARGE SCALE ANALYSIS] AT THR-1177; SER-4538; SER-4752; SER-4754; SER-4889; THR-4898; SER-4937; SER-4946 AND SER-5015</scope>
    <scope>IDENTIFICATION BY MASS SPECTROMETRY [LARGE SCALE ANALYSIS]</scope>
</reference>
<reference key="14">
    <citation type="journal article" date="2012" name="Mol. Cell. Proteomics">
        <title>Systematic analysis of protein pools, isoforms, and modifications affecting turnover and subcellular localization.</title>
        <authorList>
            <person name="Ahmad Y."/>
            <person name="Boisvert F.M."/>
            <person name="Lundberg E."/>
            <person name="Uhlen M."/>
            <person name="Lamond A.I."/>
        </authorList>
    </citation>
    <scope>SUBCELLULAR LOCATION [LARGE SCALE ANALYSIS]</scope>
</reference>
<reference key="15">
    <citation type="journal article" date="2013" name="J. Proteome Res.">
        <title>Toward a comprehensive characterization of a human cancer cell phosphoproteome.</title>
        <authorList>
            <person name="Zhou H."/>
            <person name="Di Palma S."/>
            <person name="Preisinger C."/>
            <person name="Peng M."/>
            <person name="Polat A.N."/>
            <person name="Heck A.J."/>
            <person name="Mohammed S."/>
        </authorList>
    </citation>
    <scope>PHOSPHORYLATION [LARGE SCALE ANALYSIS] AT SER-1754; THR-4212; SER-4538; SER-4752; SER-4754; THR-4898 AND SER-5015</scope>
    <scope>IDENTIFICATION BY MASS SPECTROMETRY [LARGE SCALE ANALYSIS]</scope>
    <source>
        <tissue>Cervix carcinoma</tissue>
        <tissue>Erythroleukemia</tissue>
    </source>
</reference>
<reference key="16">
    <citation type="journal article" date="2016" name="J. Biol. Chem.">
        <title>The crystal structure of the ubiquitin-like domain of ribosome assembly factor Ytm1 and characterization of its interaction with the AAA-ATPase Midasin.</title>
        <authorList>
            <person name="Romes E.M."/>
            <person name="Sobhany M."/>
            <person name="Stanley R.E."/>
        </authorList>
    </citation>
    <scope>INTERACTION WITH WDR12 AND NLE1</scope>
    <scope>SUBCELLULAR LOCATION</scope>
</reference>
<reference key="17">
    <citation type="journal article" date="2016" name="Mol. Cell">
        <title>The AAA ATPase MDN1 acts as a SUMO-targeted regulator in mammalian pre-ribosome remodeling.</title>
        <authorList>
            <person name="Raman N."/>
            <person name="Weir E."/>
            <person name="Mueller S."/>
        </authorList>
    </citation>
    <scope>FUNCTION</scope>
    <scope>INTERACTION WITH PELP1 AND SUMO2</scope>
</reference>
<evidence type="ECO:0000250" key="1">
    <source>
        <dbReference type="UniProtKB" id="Q12019"/>
    </source>
</evidence>
<evidence type="ECO:0000255" key="2"/>
<evidence type="ECO:0000255" key="3">
    <source>
        <dbReference type="PROSITE-ProRule" id="PRU00219"/>
    </source>
</evidence>
<evidence type="ECO:0000256" key="4">
    <source>
        <dbReference type="SAM" id="MobiDB-lite"/>
    </source>
</evidence>
<evidence type="ECO:0000269" key="5">
    <source>
    </source>
</evidence>
<evidence type="ECO:0000269" key="6">
    <source>
    </source>
</evidence>
<evidence type="ECO:0000269" key="7">
    <source>
    </source>
</evidence>
<evidence type="ECO:0007744" key="8">
    <source>
    </source>
</evidence>
<evidence type="ECO:0007744" key="9">
    <source>
    </source>
</evidence>
<evidence type="ECO:0007744" key="10">
    <source>
    </source>
</evidence>
<evidence type="ECO:0007744" key="11">
    <source>
    </source>
</evidence>
<evidence type="ECO:0007744" key="12">
    <source>
    </source>
</evidence>
<evidence type="ECO:0007744" key="13">
    <source>
    </source>
</evidence>
<evidence type="ECO:0007744" key="14">
    <source>
    </source>
</evidence>
<evidence type="ECO:0007744" key="15">
    <source>
    </source>
</evidence>
<evidence type="ECO:0007744" key="16">
    <source>
    </source>
</evidence>
<evidence type="ECO:0007744" key="17">
    <source>
    </source>
</evidence>
<keyword id="KW-0007">Acetylation</keyword>
<keyword id="KW-0067">ATP-binding</keyword>
<keyword id="KW-0143">Chaperone</keyword>
<keyword id="KW-0963">Cytoplasm</keyword>
<keyword id="KW-0547">Nucleotide-binding</keyword>
<keyword id="KW-0539">Nucleus</keyword>
<keyword id="KW-0597">Phosphoprotein</keyword>
<keyword id="KW-1267">Proteomics identification</keyword>
<keyword id="KW-1185">Reference proteome</keyword>
<keyword id="KW-0677">Repeat</keyword>
<gene>
    <name type="primary">MDN1</name>
    <name type="synonym">KIAA0301</name>
</gene>